<feature type="chain" id="PRO_0000102556" description="Endoribonuclease YbeY">
    <location>
        <begin position="1"/>
        <end position="158"/>
    </location>
</feature>
<feature type="binding site" evidence="1">
    <location>
        <position position="124"/>
    </location>
    <ligand>
        <name>Zn(2+)</name>
        <dbReference type="ChEBI" id="CHEBI:29105"/>
        <note>catalytic</note>
    </ligand>
</feature>
<feature type="binding site" evidence="1">
    <location>
        <position position="128"/>
    </location>
    <ligand>
        <name>Zn(2+)</name>
        <dbReference type="ChEBI" id="CHEBI:29105"/>
        <note>catalytic</note>
    </ligand>
</feature>
<feature type="binding site" evidence="1">
    <location>
        <position position="134"/>
    </location>
    <ligand>
        <name>Zn(2+)</name>
        <dbReference type="ChEBI" id="CHEBI:29105"/>
        <note>catalytic</note>
    </ligand>
</feature>
<reference key="1">
    <citation type="journal article" date="2002" name="Genome Res.">
        <title>A complete sequence of the T. tengcongensis genome.</title>
        <authorList>
            <person name="Bao Q."/>
            <person name="Tian Y."/>
            <person name="Li W."/>
            <person name="Xu Z."/>
            <person name="Xuan Z."/>
            <person name="Hu S."/>
            <person name="Dong W."/>
            <person name="Yang J."/>
            <person name="Chen Y."/>
            <person name="Xue Y."/>
            <person name="Xu Y."/>
            <person name="Lai X."/>
            <person name="Huang L."/>
            <person name="Dong X."/>
            <person name="Ma Y."/>
            <person name="Ling L."/>
            <person name="Tan H."/>
            <person name="Chen R."/>
            <person name="Wang J."/>
            <person name="Yu J."/>
            <person name="Yang H."/>
        </authorList>
    </citation>
    <scope>NUCLEOTIDE SEQUENCE [LARGE SCALE GENOMIC DNA]</scope>
    <source>
        <strain>DSM 15242 / JCM 11007 / NBRC 100824 / MB4</strain>
    </source>
</reference>
<organism>
    <name type="scientific">Caldanaerobacter subterraneus subsp. tengcongensis (strain DSM 15242 / JCM 11007 / NBRC 100824 / MB4)</name>
    <name type="common">Thermoanaerobacter tengcongensis</name>
    <dbReference type="NCBI Taxonomy" id="273068"/>
    <lineage>
        <taxon>Bacteria</taxon>
        <taxon>Bacillati</taxon>
        <taxon>Bacillota</taxon>
        <taxon>Clostridia</taxon>
        <taxon>Thermoanaerobacterales</taxon>
        <taxon>Thermoanaerobacteraceae</taxon>
        <taxon>Caldanaerobacter</taxon>
    </lineage>
</organism>
<keyword id="KW-0963">Cytoplasm</keyword>
<keyword id="KW-0255">Endonuclease</keyword>
<keyword id="KW-0378">Hydrolase</keyword>
<keyword id="KW-0479">Metal-binding</keyword>
<keyword id="KW-0540">Nuclease</keyword>
<keyword id="KW-1185">Reference proteome</keyword>
<keyword id="KW-0690">Ribosome biogenesis</keyword>
<keyword id="KW-0698">rRNA processing</keyword>
<keyword id="KW-0862">Zinc</keyword>
<dbReference type="EC" id="3.1.-.-" evidence="1"/>
<dbReference type="EMBL" id="AE008691">
    <property type="protein sequence ID" value="AAM24227.1"/>
    <property type="molecule type" value="Genomic_DNA"/>
</dbReference>
<dbReference type="RefSeq" id="WP_011025346.1">
    <property type="nucleotide sequence ID" value="NC_003869.1"/>
</dbReference>
<dbReference type="SMR" id="Q8RB52"/>
<dbReference type="STRING" id="273068.TTE0972"/>
<dbReference type="KEGG" id="tte:TTE0972"/>
<dbReference type="eggNOG" id="COG0319">
    <property type="taxonomic scope" value="Bacteria"/>
</dbReference>
<dbReference type="HOGENOM" id="CLU_106710_3_0_9"/>
<dbReference type="OrthoDB" id="9807740at2"/>
<dbReference type="Proteomes" id="UP000000555">
    <property type="component" value="Chromosome"/>
</dbReference>
<dbReference type="GO" id="GO:0005737">
    <property type="term" value="C:cytoplasm"/>
    <property type="evidence" value="ECO:0007669"/>
    <property type="project" value="UniProtKB-SubCell"/>
</dbReference>
<dbReference type="GO" id="GO:0004222">
    <property type="term" value="F:metalloendopeptidase activity"/>
    <property type="evidence" value="ECO:0007669"/>
    <property type="project" value="InterPro"/>
</dbReference>
<dbReference type="GO" id="GO:0004521">
    <property type="term" value="F:RNA endonuclease activity"/>
    <property type="evidence" value="ECO:0007669"/>
    <property type="project" value="UniProtKB-UniRule"/>
</dbReference>
<dbReference type="GO" id="GO:0008270">
    <property type="term" value="F:zinc ion binding"/>
    <property type="evidence" value="ECO:0007669"/>
    <property type="project" value="UniProtKB-UniRule"/>
</dbReference>
<dbReference type="GO" id="GO:0006364">
    <property type="term" value="P:rRNA processing"/>
    <property type="evidence" value="ECO:0007669"/>
    <property type="project" value="UniProtKB-UniRule"/>
</dbReference>
<dbReference type="Gene3D" id="3.40.390.30">
    <property type="entry name" value="Metalloproteases ('zincins'), catalytic domain"/>
    <property type="match status" value="1"/>
</dbReference>
<dbReference type="HAMAP" id="MF_00009">
    <property type="entry name" value="Endoribonucl_YbeY"/>
    <property type="match status" value="1"/>
</dbReference>
<dbReference type="InterPro" id="IPR023091">
    <property type="entry name" value="MetalPrtase_cat_dom_sf_prd"/>
</dbReference>
<dbReference type="InterPro" id="IPR002036">
    <property type="entry name" value="YbeY"/>
</dbReference>
<dbReference type="InterPro" id="IPR020549">
    <property type="entry name" value="YbeY_CS"/>
</dbReference>
<dbReference type="NCBIfam" id="TIGR00043">
    <property type="entry name" value="rRNA maturation RNase YbeY"/>
    <property type="match status" value="1"/>
</dbReference>
<dbReference type="PANTHER" id="PTHR46986">
    <property type="entry name" value="ENDORIBONUCLEASE YBEY, CHLOROPLASTIC"/>
    <property type="match status" value="1"/>
</dbReference>
<dbReference type="PANTHER" id="PTHR46986:SF1">
    <property type="entry name" value="ENDORIBONUCLEASE YBEY, CHLOROPLASTIC"/>
    <property type="match status" value="1"/>
</dbReference>
<dbReference type="Pfam" id="PF02130">
    <property type="entry name" value="YbeY"/>
    <property type="match status" value="1"/>
</dbReference>
<dbReference type="SUPFAM" id="SSF55486">
    <property type="entry name" value="Metalloproteases ('zincins'), catalytic domain"/>
    <property type="match status" value="1"/>
</dbReference>
<dbReference type="PROSITE" id="PS01306">
    <property type="entry name" value="UPF0054"/>
    <property type="match status" value="1"/>
</dbReference>
<comment type="function">
    <text evidence="1">Single strand-specific metallo-endoribonuclease involved in late-stage 70S ribosome quality control and in maturation of the 3' terminus of the 16S rRNA.</text>
</comment>
<comment type="cofactor">
    <cofactor evidence="1">
        <name>Zn(2+)</name>
        <dbReference type="ChEBI" id="CHEBI:29105"/>
    </cofactor>
    <text evidence="1">Binds 1 zinc ion.</text>
</comment>
<comment type="subcellular location">
    <subcellularLocation>
        <location evidence="1">Cytoplasm</location>
    </subcellularLocation>
</comment>
<comment type="similarity">
    <text evidence="1">Belongs to the endoribonuclease YbeY family.</text>
</comment>
<sequence length="158" mass="18413">MNVLIDNRQTKVDASGLEALVVRAIKATLEEEEVVDEVEVSVSFVDNEEIRKLNKYYRGIDSSTDVLSFPLMEFEEIEEGEEDEKDAEEIYPIGDIVISLEKAKEQAEEYGHSFEREVAYLTVHSMLHLLGYDHETEEERKLMREKEEKVMERLGLRR</sequence>
<accession>Q8RB52</accession>
<proteinExistence type="inferred from homology"/>
<gene>
    <name evidence="1" type="primary">ybeY</name>
    <name type="ordered locus">TTE0972</name>
</gene>
<evidence type="ECO:0000255" key="1">
    <source>
        <dbReference type="HAMAP-Rule" id="MF_00009"/>
    </source>
</evidence>
<name>YBEY_CALS4</name>
<protein>
    <recommendedName>
        <fullName evidence="1">Endoribonuclease YbeY</fullName>
        <ecNumber evidence="1">3.1.-.-</ecNumber>
    </recommendedName>
</protein>